<protein>
    <recommendedName>
        <fullName>Protein MEI2-like 7</fullName>
        <shortName>OML7</shortName>
    </recommendedName>
    <alternativeName>
        <fullName>MEI2-like protein 7</fullName>
    </alternativeName>
</protein>
<keyword id="KW-1185">Reference proteome</keyword>
<keyword id="KW-0694">RNA-binding</keyword>
<reference key="1">
    <citation type="journal article" date="2006" name="Plant Cell">
        <title>PLASTOCHRON2 regulates leaf initiation and maturation in rice.</title>
        <authorList>
            <person name="Kawakatsu T."/>
            <person name="Itoh J."/>
            <person name="Miyoshi K."/>
            <person name="Kurata N."/>
            <person name="Alvarez N."/>
            <person name="Veit B."/>
            <person name="Nagato Y."/>
        </authorList>
    </citation>
    <scope>NUCLEOTIDE SEQUENCE [MRNA]</scope>
    <source>
        <strain>cv. Nipponbare</strain>
    </source>
</reference>
<reference key="2">
    <citation type="journal article" date="2005" name="Nature">
        <title>The map-based sequence of the rice genome.</title>
        <authorList>
            <consortium name="International rice genome sequencing project (IRGSP)"/>
        </authorList>
    </citation>
    <scope>NUCLEOTIDE SEQUENCE [LARGE SCALE GENOMIC DNA]</scope>
    <source>
        <strain>cv. Nipponbare</strain>
    </source>
</reference>
<reference key="3">
    <citation type="journal article" date="2013" name="Rice">
        <title>Improvement of the Oryza sativa Nipponbare reference genome using next generation sequence and optical map data.</title>
        <authorList>
            <person name="Kawahara Y."/>
            <person name="de la Bastide M."/>
            <person name="Hamilton J.P."/>
            <person name="Kanamori H."/>
            <person name="McCombie W.R."/>
            <person name="Ouyang S."/>
            <person name="Schwartz D.C."/>
            <person name="Tanaka T."/>
            <person name="Wu J."/>
            <person name="Zhou S."/>
            <person name="Childs K.L."/>
            <person name="Davidson R.M."/>
            <person name="Lin H."/>
            <person name="Quesada-Ocampo L."/>
            <person name="Vaillancourt B."/>
            <person name="Sakai H."/>
            <person name="Lee S.S."/>
            <person name="Kim J."/>
            <person name="Numa H."/>
            <person name="Itoh T."/>
            <person name="Buell C.R."/>
            <person name="Matsumoto T."/>
        </authorList>
    </citation>
    <scope>GENOME REANNOTATION</scope>
    <source>
        <strain>cv. Nipponbare</strain>
    </source>
</reference>
<reference key="4">
    <citation type="journal article" date="2004" name="Plant Mol. Biol.">
        <title>Diversification of genes encoding mei2 -like RNA binding proteins in plants.</title>
        <authorList>
            <person name="Anderson G.H."/>
            <person name="Alvarez N.D."/>
            <person name="Gilman C."/>
            <person name="Jeffares D.C."/>
            <person name="Trainor V.C."/>
            <person name="Hanson M.R."/>
            <person name="Veit B."/>
        </authorList>
    </citation>
    <scope>GENE FAMILY</scope>
</reference>
<sequence>MAVTKLNPSAAPFHCSRRHLFFAPPPPPPPPMPAYQYHATGACAAAAPPPFPFFATYSCASLPFHGHLYPPCGYQAQMGPAPPGAAFAKGVLAAAPPPPHGRPPHKLMVCKGAPTVTDVKLRAQARAAARVGVAAAVRGWRPAPATAGPPRMLVAAAPCGMLHPAAVARRRGMSKVYKPRKPQRAGRERSPSPSPVFTTRPMSPTPPMQKLKPAHTTVMVRNIPNKLTRSDMVRLLDDHCARENRRRGRGGEPRAEYDLVYVRMDFGMCNKERSSNMGYAFVNFTTAEAARGLQRALHGCRWKRSAFDSGKIIDIRAARIQGKDALVRHFGRTTYYECDTDEYLPAVFSPPRDGSTAGAGAPSPPAVKTVGIRVPPRPITLLTHRGNVN</sequence>
<evidence type="ECO:0000250" key="1"/>
<evidence type="ECO:0000255" key="2">
    <source>
        <dbReference type="PROSITE-ProRule" id="PRU00176"/>
    </source>
</evidence>
<evidence type="ECO:0000256" key="3">
    <source>
        <dbReference type="SAM" id="MobiDB-lite"/>
    </source>
</evidence>
<gene>
    <name type="primary">OML7</name>
    <name type="ordered locus">Os02g0157900</name>
    <name type="ordered locus">LOC_Os02g06320</name>
    <name type="ORF">B1103G11.10</name>
    <name type="ORF">P0419H03.30</name>
</gene>
<proteinExistence type="evidence at transcript level"/>
<feature type="chain" id="PRO_0000409351" description="Protein MEI2-like 7">
    <location>
        <begin position="1"/>
        <end position="389"/>
    </location>
</feature>
<feature type="domain" description="RRM" evidence="2">
    <location>
        <begin position="216"/>
        <end position="320"/>
    </location>
</feature>
<feature type="region of interest" description="Disordered" evidence="3">
    <location>
        <begin position="170"/>
        <end position="211"/>
    </location>
</feature>
<feature type="region of interest" description="Disordered" evidence="3">
    <location>
        <begin position="351"/>
        <end position="370"/>
    </location>
</feature>
<feature type="compositionally biased region" description="Basic residues" evidence="3">
    <location>
        <begin position="170"/>
        <end position="184"/>
    </location>
</feature>
<comment type="function">
    <text evidence="1">Probable RNA-binding protein that may play a role in growth regulation.</text>
</comment>
<dbReference type="EMBL" id="AB244282">
    <property type="protein sequence ID" value="BAE79769.1"/>
    <property type="molecule type" value="mRNA"/>
</dbReference>
<dbReference type="EMBL" id="AP004843">
    <property type="protein sequence ID" value="BAD28026.1"/>
    <property type="molecule type" value="Genomic_DNA"/>
</dbReference>
<dbReference type="EMBL" id="AP004871">
    <property type="protein sequence ID" value="BAD28171.1"/>
    <property type="molecule type" value="Genomic_DNA"/>
</dbReference>
<dbReference type="EMBL" id="AP014958">
    <property type="protein sequence ID" value="BAS77071.1"/>
    <property type="molecule type" value="Genomic_DNA"/>
</dbReference>
<dbReference type="RefSeq" id="XP_015625077.1">
    <property type="nucleotide sequence ID" value="XM_015769591.1"/>
</dbReference>
<dbReference type="SMR" id="Q6ET49"/>
<dbReference type="PaxDb" id="39947-Q6ET49"/>
<dbReference type="EnsemblPlants" id="Os02t0157900-00">
    <property type="protein sequence ID" value="Os02t0157900-00"/>
    <property type="gene ID" value="Os02g0157900"/>
</dbReference>
<dbReference type="GeneID" id="107275958"/>
<dbReference type="Gramene" id="Os02t0157900-00">
    <property type="protein sequence ID" value="Os02t0157900-00"/>
    <property type="gene ID" value="Os02g0157900"/>
</dbReference>
<dbReference type="KEGG" id="osa:107275958"/>
<dbReference type="eggNOG" id="KOG4660">
    <property type="taxonomic scope" value="Eukaryota"/>
</dbReference>
<dbReference type="HOGENOM" id="CLU_062324_0_0_1"/>
<dbReference type="InParanoid" id="Q6ET49"/>
<dbReference type="OMA" id="RPPHKLM"/>
<dbReference type="OrthoDB" id="417481at2759"/>
<dbReference type="Proteomes" id="UP000000763">
    <property type="component" value="Chromosome 2"/>
</dbReference>
<dbReference type="Proteomes" id="UP000059680">
    <property type="component" value="Chromosome 2"/>
</dbReference>
<dbReference type="GO" id="GO:1990904">
    <property type="term" value="C:ribonucleoprotein complex"/>
    <property type="evidence" value="ECO:0000318"/>
    <property type="project" value="GO_Central"/>
</dbReference>
<dbReference type="GO" id="GO:0003723">
    <property type="term" value="F:RNA binding"/>
    <property type="evidence" value="ECO:0000318"/>
    <property type="project" value="GO_Central"/>
</dbReference>
<dbReference type="CDD" id="cd12277">
    <property type="entry name" value="RRM3_MEI2_EAR1_like"/>
    <property type="match status" value="1"/>
</dbReference>
<dbReference type="Gene3D" id="3.30.70.330">
    <property type="match status" value="1"/>
</dbReference>
<dbReference type="InterPro" id="IPR007201">
    <property type="entry name" value="Mei2-like_Rrm_C"/>
</dbReference>
<dbReference type="InterPro" id="IPR012677">
    <property type="entry name" value="Nucleotide-bd_a/b_plait_sf"/>
</dbReference>
<dbReference type="InterPro" id="IPR035979">
    <property type="entry name" value="RBD_domain_sf"/>
</dbReference>
<dbReference type="InterPro" id="IPR000504">
    <property type="entry name" value="RRM_dom"/>
</dbReference>
<dbReference type="Pfam" id="PF04059">
    <property type="entry name" value="RRM_2"/>
    <property type="match status" value="1"/>
</dbReference>
<dbReference type="SUPFAM" id="SSF54928">
    <property type="entry name" value="RNA-binding domain, RBD"/>
    <property type="match status" value="1"/>
</dbReference>
<dbReference type="PROSITE" id="PS50102">
    <property type="entry name" value="RRM"/>
    <property type="match status" value="1"/>
</dbReference>
<accession>Q6ET49</accession>
<accession>A0A0P0VF35</accession>
<organism>
    <name type="scientific">Oryza sativa subsp. japonica</name>
    <name type="common">Rice</name>
    <dbReference type="NCBI Taxonomy" id="39947"/>
    <lineage>
        <taxon>Eukaryota</taxon>
        <taxon>Viridiplantae</taxon>
        <taxon>Streptophyta</taxon>
        <taxon>Embryophyta</taxon>
        <taxon>Tracheophyta</taxon>
        <taxon>Spermatophyta</taxon>
        <taxon>Magnoliopsida</taxon>
        <taxon>Liliopsida</taxon>
        <taxon>Poales</taxon>
        <taxon>Poaceae</taxon>
        <taxon>BOP clade</taxon>
        <taxon>Oryzoideae</taxon>
        <taxon>Oryzeae</taxon>
        <taxon>Oryzinae</taxon>
        <taxon>Oryza</taxon>
        <taxon>Oryza sativa</taxon>
    </lineage>
</organism>
<name>OML7_ORYSJ</name>